<feature type="chain" id="PRO_0000456519" description="Large ribosomal subunit protein eL20">
    <location>
        <begin position="1"/>
        <end position="172"/>
    </location>
</feature>
<comment type="function">
    <text evidence="4">Component of the ribosome, a large ribonucleoprotein complex responsible for the synthesis of proteins in the cell. The small ribosomal subunit (SSU) binds messenger RNAs (mRNAs) and translates the encoded message by selecting cognate aminoacyl-transfer RNA (tRNA) molecules. The large subunit (LSU) contains the ribosomal catalytic site termed the peptidyl transferase center (PTC), which catalyzes the formation of peptide bonds, thereby polymerizing the amino acids delivered by tRNAs into a polypeptide chain. The nascent polypeptides leave the ribosome through a tunnel in the LSU and interact with protein factors that function in enzymatic processing, targeting, and the membrane insertion of nascent chains at the exit of the ribosomal tunnel.</text>
</comment>
<comment type="subunit">
    <text evidence="1">Component of the large ribosomal subunit (PubMed:35613268). Mature ribosomes consist of a small (40S) and a large (60S) subunit (PubMed:35613268). The 40S subunit contains about 32 different proteins and 1 molecule of RNA (18S) (PubMed:35613268). The 60S subunit contains 45 different proteins and 3 molecules of RNA (25S, 5.8S and 5S) (PubMed:35613268).</text>
</comment>
<comment type="subcellular location">
    <subcellularLocation>
        <location evidence="4">Cytoplasm</location>
    </subcellularLocation>
</comment>
<comment type="similarity">
    <text evidence="3">Belongs to the eukaryotic ribosomal protein eL20 family.</text>
</comment>
<protein>
    <recommendedName>
        <fullName evidence="2">Large ribosomal subunit protein eL20</fullName>
    </recommendedName>
    <alternativeName>
        <fullName>60S ribosomal protein L20-B</fullName>
    </alternativeName>
</protein>
<proteinExistence type="evidence at protein level"/>
<evidence type="ECO:0000269" key="1">
    <source>
    </source>
</evidence>
<evidence type="ECO:0000303" key="2">
    <source>
    </source>
</evidence>
<evidence type="ECO:0000305" key="3"/>
<evidence type="ECO:0000305" key="4">
    <source>
    </source>
</evidence>
<evidence type="ECO:0007744" key="5">
    <source>
        <dbReference type="PDB" id="7PZY"/>
    </source>
</evidence>
<evidence type="ECO:0007744" key="6">
    <source>
        <dbReference type="PDB" id="7Q0F"/>
    </source>
</evidence>
<evidence type="ECO:0007744" key="7">
    <source>
        <dbReference type="PDB" id="7Q0P"/>
    </source>
</evidence>
<dbReference type="EMBL" id="CP017626">
    <property type="protein sequence ID" value="AOW28933.1"/>
    <property type="molecule type" value="Genomic_DNA"/>
</dbReference>
<dbReference type="RefSeq" id="XP_722704.1">
    <property type="nucleotide sequence ID" value="XM_717611.1"/>
</dbReference>
<dbReference type="PDB" id="7PZY">
    <property type="method" value="EM"/>
    <property type="resolution" value="2.32 A"/>
    <property type="chains" value="0=1-172"/>
</dbReference>
<dbReference type="PDB" id="7Q08">
    <property type="method" value="EM"/>
    <property type="resolution" value="2.56 A"/>
    <property type="chains" value="0=1-172"/>
</dbReference>
<dbReference type="PDB" id="7Q0F">
    <property type="method" value="EM"/>
    <property type="resolution" value="2.64 A"/>
    <property type="chains" value="0=1-172"/>
</dbReference>
<dbReference type="PDB" id="7Q0P">
    <property type="method" value="EM"/>
    <property type="resolution" value="2.77 A"/>
    <property type="chains" value="0=1-172"/>
</dbReference>
<dbReference type="PDB" id="7Q0R">
    <property type="method" value="EM"/>
    <property type="resolution" value="2.67 A"/>
    <property type="chains" value="0=1-172"/>
</dbReference>
<dbReference type="PDB" id="8C3A">
    <property type="method" value="X-ray"/>
    <property type="resolution" value="3.00 A"/>
    <property type="chains" value="0/BN=1-172"/>
</dbReference>
<dbReference type="PDB" id="8OGJ">
    <property type="method" value="EM"/>
    <property type="resolution" value="3.10 A"/>
    <property type="chains" value="0=1-172"/>
</dbReference>
<dbReference type="PDB" id="8OH6">
    <property type="method" value="X-ray"/>
    <property type="resolution" value="3.35 A"/>
    <property type="chains" value="0/BN=1-172"/>
</dbReference>
<dbReference type="PDB" id="8OI5">
    <property type="method" value="X-ray"/>
    <property type="resolution" value="2.90 A"/>
    <property type="chains" value="0/BN=1-172"/>
</dbReference>
<dbReference type="PDB" id="8OJ3">
    <property type="method" value="X-ray"/>
    <property type="resolution" value="3.50 A"/>
    <property type="chains" value="0/BN=1-172"/>
</dbReference>
<dbReference type="PDBsum" id="7PZY"/>
<dbReference type="PDBsum" id="7Q08"/>
<dbReference type="PDBsum" id="7Q0F"/>
<dbReference type="PDBsum" id="7Q0P"/>
<dbReference type="PDBsum" id="7Q0R"/>
<dbReference type="PDBsum" id="8C3A"/>
<dbReference type="PDBsum" id="8OGJ"/>
<dbReference type="PDBsum" id="8OH6"/>
<dbReference type="PDBsum" id="8OI5"/>
<dbReference type="PDBsum" id="8OJ3"/>
<dbReference type="EMDB" id="EMD-13737"/>
<dbReference type="EMDB" id="EMD-13741"/>
<dbReference type="EMDB" id="EMD-13744"/>
<dbReference type="EMDB" id="EMD-13749"/>
<dbReference type="EMDB" id="EMD-13750"/>
<dbReference type="SMR" id="A0A1D8PLC9"/>
<dbReference type="FunCoup" id="A0A1D8PLC9">
    <property type="interactions" value="1392"/>
</dbReference>
<dbReference type="STRING" id="237561.A0A1D8PLC9"/>
<dbReference type="EnsemblFungi" id="C4_01520C_A-T">
    <property type="protein sequence ID" value="C4_01520C_A-T-p1"/>
    <property type="gene ID" value="C4_01520C_A"/>
</dbReference>
<dbReference type="GeneID" id="3635615"/>
<dbReference type="KEGG" id="cal:CAALFM_C401520CA"/>
<dbReference type="CGD" id="CAL0000200399">
    <property type="gene designation" value="RPL20B"/>
</dbReference>
<dbReference type="VEuPathDB" id="FungiDB:C4_01520C_A"/>
<dbReference type="eggNOG" id="KOG0829">
    <property type="taxonomic scope" value="Eukaryota"/>
</dbReference>
<dbReference type="InParanoid" id="A0A1D8PLC9"/>
<dbReference type="OMA" id="CIFAKND"/>
<dbReference type="OrthoDB" id="1294322at2759"/>
<dbReference type="Proteomes" id="UP000000559">
    <property type="component" value="Chromosome 4"/>
</dbReference>
<dbReference type="GO" id="GO:0009986">
    <property type="term" value="C:cell surface"/>
    <property type="evidence" value="ECO:0000314"/>
    <property type="project" value="CGD"/>
</dbReference>
<dbReference type="GO" id="GO:0022625">
    <property type="term" value="C:cytosolic large ribosomal subunit"/>
    <property type="evidence" value="ECO:0000318"/>
    <property type="project" value="GO_Central"/>
</dbReference>
<dbReference type="GO" id="GO:0003735">
    <property type="term" value="F:structural constituent of ribosome"/>
    <property type="evidence" value="ECO:0000318"/>
    <property type="project" value="GO_Central"/>
</dbReference>
<dbReference type="GO" id="GO:0002181">
    <property type="term" value="P:cytoplasmic translation"/>
    <property type="evidence" value="ECO:0000318"/>
    <property type="project" value="GO_Central"/>
</dbReference>
<dbReference type="FunFam" id="3.10.20.10:FF:000001">
    <property type="entry name" value="60S ribosomal protein L18a"/>
    <property type="match status" value="1"/>
</dbReference>
<dbReference type="FunFam" id="3.10.20.10:FF:000002">
    <property type="entry name" value="60S ribosomal protein L18a"/>
    <property type="match status" value="1"/>
</dbReference>
<dbReference type="Gene3D" id="3.10.20.10">
    <property type="match status" value="2"/>
</dbReference>
<dbReference type="HAMAP" id="MF_00273">
    <property type="entry name" value="Ribosomal_eL20"/>
    <property type="match status" value="1"/>
</dbReference>
<dbReference type="InterPro" id="IPR028877">
    <property type="entry name" value="Ribosomal_eL20"/>
</dbReference>
<dbReference type="InterPro" id="IPR023573">
    <property type="entry name" value="Ribosomal_eL20_dom"/>
</dbReference>
<dbReference type="InterPro" id="IPR021138">
    <property type="entry name" value="Ribosomal_eL20_eukaryotes"/>
</dbReference>
<dbReference type="PANTHER" id="PTHR10052">
    <property type="entry name" value="60S RIBOSOMAL PROTEIN L18A"/>
    <property type="match status" value="1"/>
</dbReference>
<dbReference type="Pfam" id="PF01775">
    <property type="entry name" value="Ribosomal_L18A"/>
    <property type="match status" value="1"/>
</dbReference>
<dbReference type="PIRSF" id="PIRSF002190">
    <property type="entry name" value="Ribosomal_L18a"/>
    <property type="match status" value="1"/>
</dbReference>
<dbReference type="SUPFAM" id="SSF160374">
    <property type="entry name" value="RplX-like"/>
    <property type="match status" value="1"/>
</dbReference>
<accession>A0A1D8PLC9</accession>
<gene>
    <name evidence="2" type="primary">RPL20B</name>
    <name type="synonym">RPL20</name>
    <name type="ordered locus">orf19.4632</name>
    <name type="ORF">CAALFM_C401520CA</name>
</gene>
<name>RL20B_CANAL</name>
<reference key="1">
    <citation type="journal article" date="2004" name="Proc. Natl. Acad. Sci. U.S.A.">
        <title>The diploid genome sequence of Candida albicans.</title>
        <authorList>
            <person name="Jones T."/>
            <person name="Federspiel N.A."/>
            <person name="Chibana H."/>
            <person name="Dungan J."/>
            <person name="Kalman S."/>
            <person name="Magee B.B."/>
            <person name="Newport G."/>
            <person name="Thorstenson Y.R."/>
            <person name="Agabian N."/>
            <person name="Magee P.T."/>
            <person name="Davis R.W."/>
            <person name="Scherer S."/>
        </authorList>
    </citation>
    <scope>NUCLEOTIDE SEQUENCE [LARGE SCALE GENOMIC DNA]</scope>
    <source>
        <strain>SC5314 / ATCC MYA-2876</strain>
    </source>
</reference>
<reference key="2">
    <citation type="journal article" date="2007" name="Genome Biol.">
        <title>Assembly of the Candida albicans genome into sixteen supercontigs aligned on the eight chromosomes.</title>
        <authorList>
            <person name="van het Hoog M."/>
            <person name="Rast T.J."/>
            <person name="Martchenko M."/>
            <person name="Grindle S."/>
            <person name="Dignard D."/>
            <person name="Hogues H."/>
            <person name="Cuomo C."/>
            <person name="Berriman M."/>
            <person name="Scherer S."/>
            <person name="Magee B.B."/>
            <person name="Whiteway M."/>
            <person name="Chibana H."/>
            <person name="Nantel A."/>
            <person name="Magee P.T."/>
        </authorList>
    </citation>
    <scope>GENOME REANNOTATION</scope>
    <source>
        <strain>SC5314 / ATCC MYA-2876</strain>
    </source>
</reference>
<reference key="3">
    <citation type="journal article" date="2013" name="Genome Biol.">
        <title>Assembly of a phased diploid Candida albicans genome facilitates allele-specific measurements and provides a simple model for repeat and indel structure.</title>
        <authorList>
            <person name="Muzzey D."/>
            <person name="Schwartz K."/>
            <person name="Weissman J.S."/>
            <person name="Sherlock G."/>
        </authorList>
    </citation>
    <scope>NUCLEOTIDE SEQUENCE [LARGE SCALE GENOMIC DNA]</scope>
    <scope>GENOME REANNOTATION</scope>
    <source>
        <strain>SC5314 / ATCC MYA-2876</strain>
    </source>
</reference>
<reference evidence="5 6 7" key="4">
    <citation type="journal article" date="2022" name="Sci. Adv.">
        <title>E-site drug specificity of the human pathogen Candida albicans ribosome.</title>
        <authorList>
            <person name="Zgadzay Y."/>
            <person name="Kolosova O."/>
            <person name="Stetsenko A."/>
            <person name="Wu C."/>
            <person name="Bruchlen D."/>
            <person name="Usachev K."/>
            <person name="Validov S."/>
            <person name="Jenner L."/>
            <person name="Rogachev A."/>
            <person name="Yusupova G."/>
            <person name="Sachs M.S."/>
            <person name="Guskov A."/>
            <person name="Yusupov M."/>
        </authorList>
    </citation>
    <scope>STRUCTURE BY ELECTRON MICROSCOPY (2.32 ANGSTROMS) OF THE 80S RIBOSOME</scope>
    <scope>SUBUNIT</scope>
</reference>
<organism>
    <name type="scientific">Candida albicans (strain SC5314 / ATCC MYA-2876)</name>
    <name type="common">Yeast</name>
    <dbReference type="NCBI Taxonomy" id="237561"/>
    <lineage>
        <taxon>Eukaryota</taxon>
        <taxon>Fungi</taxon>
        <taxon>Dikarya</taxon>
        <taxon>Ascomycota</taxon>
        <taxon>Saccharomycotina</taxon>
        <taxon>Pichiomycetes</taxon>
        <taxon>Debaryomycetaceae</taxon>
        <taxon>Candida/Lodderomyces clade</taxon>
        <taxon>Candida</taxon>
    </lineage>
</organism>
<sequence length="172" mass="20338">MSRLNEYQVIGRNLPTESVPEPKLFRMRIFAPNTVVAKSRYWYFLQKLHKVKKASGEIVSVNIISEAKPTKVKTFGIWLRYESRSGIHNMYKEYRDVTRVGAVETMYQDLAARHRARFRSIHILKVVELEKTDDVKRQYVKQFLTKDLKFPLPHRVQKSKKLFQATAPTTFY</sequence>
<keyword id="KW-0002">3D-structure</keyword>
<keyword id="KW-0963">Cytoplasm</keyword>
<keyword id="KW-1185">Reference proteome</keyword>
<keyword id="KW-0687">Ribonucleoprotein</keyword>
<keyword id="KW-0689">Ribosomal protein</keyword>